<keyword id="KW-0963">Cytoplasm</keyword>
<keyword id="KW-0325">Glycoprotein</keyword>
<keyword id="KW-0472">Membrane</keyword>
<keyword id="KW-1185">Reference proteome</keyword>
<keyword id="KW-0762">Sugar transport</keyword>
<keyword id="KW-0812">Transmembrane</keyword>
<keyword id="KW-1133">Transmembrane helix</keyword>
<keyword id="KW-0813">Transport</keyword>
<organism>
    <name type="scientific">Xenopus tropicalis</name>
    <name type="common">Western clawed frog</name>
    <name type="synonym">Silurana tropicalis</name>
    <dbReference type="NCBI Taxonomy" id="8364"/>
    <lineage>
        <taxon>Eukaryota</taxon>
        <taxon>Metazoa</taxon>
        <taxon>Chordata</taxon>
        <taxon>Craniata</taxon>
        <taxon>Vertebrata</taxon>
        <taxon>Euteleostomi</taxon>
        <taxon>Amphibia</taxon>
        <taxon>Batrachia</taxon>
        <taxon>Anura</taxon>
        <taxon>Pipoidea</taxon>
        <taxon>Pipidae</taxon>
        <taxon>Xenopodinae</taxon>
        <taxon>Xenopus</taxon>
        <taxon>Silurana</taxon>
    </lineage>
</organism>
<reference key="1">
    <citation type="submission" date="2006-08" db="EMBL/GenBank/DDBJ databases">
        <authorList>
            <consortium name="NIH - Xenopus Gene Collection (XGC) project"/>
        </authorList>
    </citation>
    <scope>NUCLEOTIDE SEQUENCE [LARGE SCALE MRNA]</scope>
    <source>
        <strain>N6</strain>
        <tissue>Skin</tissue>
    </source>
</reference>
<gene>
    <name evidence="1" type="primary">slc2a10</name>
    <name evidence="1" type="synonym">glut10</name>
</gene>
<sequence length="555" mass="60279">MGLSSPTLILAATVSLLGGIVFGYELGIISGALLVLKTVYQLTCFEQEALVSAVLFGALLASLIGGIIIDRWGRRTAILASNLVVLAGSIILIATSTFWWLIVGRVTIGFAISISSMACCIYVSEIVRPHQRGMLVSLYETGITVGILISYAMNYFLSGVNESWKYMFGLAIVPAAFQFISILFLPSKPHKLNFWEQDTDDGFIELEETGEAGEFKPDTYDRQYTFLDLFRSKDNMRTRTLLGLGLVLFQQFTGQPNVLYYASTIFQSVGFQSNSSAVLASVGLGVVKVASTLIAICFADKAGRRILLLAGCIVMTIAITGIGIVSFTVKMDSHRDCGSVTGRNMSSGESNVSQLLGIVHAETSTINTLDNSVHQLAMAIRSPSLANSASSNHKDLISQNSTVLPASPELPSNYTILNWITLLSMMAFVSAFSIGFGPMTWIVLSEIYPADIRGRAFAFCNSFNWAANLLITLTFLDVIASIGLSWTFLLYGVVGLLAIAFIYFFIPETKGQSLEEIDKQFSTKRILQKRETSKGVGKRPSSGPPYQRIGKASPS</sequence>
<name>GTR10_XENTR</name>
<evidence type="ECO:0000250" key="1">
    <source>
        <dbReference type="UniProtKB" id="O95528"/>
    </source>
</evidence>
<evidence type="ECO:0000250" key="2">
    <source>
        <dbReference type="UniProtKB" id="P11169"/>
    </source>
</evidence>
<evidence type="ECO:0000255" key="3"/>
<evidence type="ECO:0000256" key="4">
    <source>
        <dbReference type="SAM" id="MobiDB-lite"/>
    </source>
</evidence>
<evidence type="ECO:0000305" key="5"/>
<protein>
    <recommendedName>
        <fullName evidence="5">Solute carrier family 2, facilitated glucose transporter member 10</fullName>
    </recommendedName>
    <alternativeName>
        <fullName evidence="1">Glucose transporter type 10</fullName>
        <shortName evidence="1">GLUT-10</shortName>
    </alternativeName>
</protein>
<comment type="function">
    <text evidence="1">Facilitative glucose transporter required for the development of the cardiovascular system.</text>
</comment>
<comment type="catalytic activity">
    <reaction evidence="1">
        <text>D-glucose(out) = D-glucose(in)</text>
        <dbReference type="Rhea" id="RHEA:60376"/>
        <dbReference type="ChEBI" id="CHEBI:4167"/>
    </reaction>
</comment>
<comment type="subcellular location">
    <subcellularLocation>
        <location evidence="1">Endomembrane system</location>
        <topology evidence="3">Multi-pass membrane protein</topology>
    </subcellularLocation>
    <subcellularLocation>
        <location evidence="1">Cytoplasm</location>
        <location evidence="1">Perinuclear region</location>
    </subcellularLocation>
</comment>
<comment type="similarity">
    <text evidence="5">Belongs to the major facilitator superfamily. Sugar transporter (TC 2.A.1.1) family. Glucose transporter subfamily.</text>
</comment>
<dbReference type="EMBL" id="BC122089">
    <property type="protein sequence ID" value="AAI22090.1"/>
    <property type="molecule type" value="mRNA"/>
</dbReference>
<dbReference type="RefSeq" id="NP_001072926.1">
    <property type="nucleotide sequence ID" value="NM_001079458.1"/>
</dbReference>
<dbReference type="RefSeq" id="XP_012808042.1">
    <property type="nucleotide sequence ID" value="XM_012952588.3"/>
</dbReference>
<dbReference type="RefSeq" id="XP_012808043.1">
    <property type="nucleotide sequence ID" value="XM_012952589.2"/>
</dbReference>
<dbReference type="RefSeq" id="XP_012808044.1">
    <property type="nucleotide sequence ID" value="XM_012952590.2"/>
</dbReference>
<dbReference type="RefSeq" id="XP_012808046.1">
    <property type="nucleotide sequence ID" value="XM_012952592.2"/>
</dbReference>
<dbReference type="RefSeq" id="XP_012808047.1">
    <property type="nucleotide sequence ID" value="XM_012952593.3"/>
</dbReference>
<dbReference type="RefSeq" id="XP_012808049.1">
    <property type="nucleotide sequence ID" value="XM_012952595.2"/>
</dbReference>
<dbReference type="RefSeq" id="XP_031750042.1">
    <property type="nucleotide sequence ID" value="XM_031894182.1"/>
</dbReference>
<dbReference type="RefSeq" id="XP_031750043.1">
    <property type="nucleotide sequence ID" value="XM_031894183.1"/>
</dbReference>
<dbReference type="RefSeq" id="XP_031750044.1">
    <property type="nucleotide sequence ID" value="XM_031894184.1"/>
</dbReference>
<dbReference type="RefSeq" id="XP_031750045.1">
    <property type="nucleotide sequence ID" value="XM_031894185.1"/>
</dbReference>
<dbReference type="RefSeq" id="XP_031750046.1">
    <property type="nucleotide sequence ID" value="XM_031894186.1"/>
</dbReference>
<dbReference type="SMR" id="Q0P4G6"/>
<dbReference type="FunCoup" id="Q0P4G6">
    <property type="interactions" value="127"/>
</dbReference>
<dbReference type="STRING" id="8364.ENSXETP00000032370"/>
<dbReference type="GlyCosmos" id="Q0P4G6">
    <property type="glycosylation" value="6 sites, No reported glycans"/>
</dbReference>
<dbReference type="PaxDb" id="8364-ENSXETP00000007515"/>
<dbReference type="DNASU" id="780388"/>
<dbReference type="GeneID" id="780388"/>
<dbReference type="KEGG" id="xtr:780388"/>
<dbReference type="AGR" id="Xenbase:XB-GENE-950490"/>
<dbReference type="CTD" id="81031"/>
<dbReference type="Xenbase" id="XB-GENE-950490">
    <property type="gene designation" value="slc2a10"/>
</dbReference>
<dbReference type="eggNOG" id="KOG0254">
    <property type="taxonomic scope" value="Eukaryota"/>
</dbReference>
<dbReference type="HOGENOM" id="CLU_001265_30_5_1"/>
<dbReference type="InParanoid" id="Q0P4G6"/>
<dbReference type="OMA" id="GCYRIPV"/>
<dbReference type="OrthoDB" id="4142200at2759"/>
<dbReference type="PhylomeDB" id="Q0P4G6"/>
<dbReference type="TreeFam" id="TF332408"/>
<dbReference type="Reactome" id="R-XTR-189200">
    <property type="pathway name" value="Cellular hexose transport"/>
</dbReference>
<dbReference type="Proteomes" id="UP000008143">
    <property type="component" value="Chromosome 10"/>
</dbReference>
<dbReference type="Bgee" id="ENSXETG00000003471">
    <property type="expression patterns" value="Expressed in ovary and 12 other cell types or tissues"/>
</dbReference>
<dbReference type="GO" id="GO:0012505">
    <property type="term" value="C:endomembrane system"/>
    <property type="evidence" value="ECO:0007669"/>
    <property type="project" value="UniProtKB-SubCell"/>
</dbReference>
<dbReference type="GO" id="GO:0016020">
    <property type="term" value="C:membrane"/>
    <property type="evidence" value="ECO:0007669"/>
    <property type="project" value="UniProtKB-KW"/>
</dbReference>
<dbReference type="GO" id="GO:0048471">
    <property type="term" value="C:perinuclear region of cytoplasm"/>
    <property type="evidence" value="ECO:0007669"/>
    <property type="project" value="UniProtKB-SubCell"/>
</dbReference>
<dbReference type="GO" id="GO:0022857">
    <property type="term" value="F:transmembrane transporter activity"/>
    <property type="evidence" value="ECO:0007669"/>
    <property type="project" value="InterPro"/>
</dbReference>
<dbReference type="CDD" id="cd17436">
    <property type="entry name" value="MFS_GLUT10_Class3"/>
    <property type="match status" value="1"/>
</dbReference>
<dbReference type="FunFam" id="1.20.1250.20:FF:000790">
    <property type="entry name" value="Solute carrier family 2 member 10"/>
    <property type="match status" value="1"/>
</dbReference>
<dbReference type="FunFam" id="1.20.1250.20:FF:000164">
    <property type="entry name" value="solute carrier family 2, facilitated glucose transporter member 10"/>
    <property type="match status" value="1"/>
</dbReference>
<dbReference type="Gene3D" id="1.20.1250.20">
    <property type="entry name" value="MFS general substrate transporter like domains"/>
    <property type="match status" value="2"/>
</dbReference>
<dbReference type="InterPro" id="IPR020846">
    <property type="entry name" value="MFS_dom"/>
</dbReference>
<dbReference type="InterPro" id="IPR005828">
    <property type="entry name" value="MFS_sugar_transport-like"/>
</dbReference>
<dbReference type="InterPro" id="IPR050820">
    <property type="entry name" value="MFS_Sugar_Transporter"/>
</dbReference>
<dbReference type="InterPro" id="IPR036259">
    <property type="entry name" value="MFS_trans_sf"/>
</dbReference>
<dbReference type="InterPro" id="IPR003663">
    <property type="entry name" value="Sugar/inositol_transpt"/>
</dbReference>
<dbReference type="InterPro" id="IPR005829">
    <property type="entry name" value="Sugar_transporter_CS"/>
</dbReference>
<dbReference type="PANTHER" id="PTHR48023">
    <property type="entry name" value="D-XYLOSE-PROTON SYMPORTER-LIKE 2"/>
    <property type="match status" value="1"/>
</dbReference>
<dbReference type="PANTHER" id="PTHR48023:SF7">
    <property type="entry name" value="SOLUTE CARRIER FAMILY 2, FACILITATED GLUCOSE TRANSPORTER MEMBER 10"/>
    <property type="match status" value="1"/>
</dbReference>
<dbReference type="Pfam" id="PF00083">
    <property type="entry name" value="Sugar_tr"/>
    <property type="match status" value="2"/>
</dbReference>
<dbReference type="PRINTS" id="PR00171">
    <property type="entry name" value="SUGRTRNSPORT"/>
</dbReference>
<dbReference type="SUPFAM" id="SSF103473">
    <property type="entry name" value="MFS general substrate transporter"/>
    <property type="match status" value="1"/>
</dbReference>
<dbReference type="PROSITE" id="PS50850">
    <property type="entry name" value="MFS"/>
    <property type="match status" value="1"/>
</dbReference>
<dbReference type="PROSITE" id="PS00216">
    <property type="entry name" value="SUGAR_TRANSPORT_1"/>
    <property type="match status" value="2"/>
</dbReference>
<proteinExistence type="evidence at transcript level"/>
<accession>Q0P4G6</accession>
<feature type="chain" id="PRO_0000270194" description="Solute carrier family 2, facilitated glucose transporter member 10">
    <location>
        <begin position="1"/>
        <end position="555"/>
    </location>
</feature>
<feature type="topological domain" description="Cytoplasmic" evidence="3">
    <location>
        <begin position="1"/>
        <end position="15"/>
    </location>
</feature>
<feature type="transmembrane region" description="Helical; Name=1" evidence="3">
    <location>
        <begin position="16"/>
        <end position="36"/>
    </location>
</feature>
<feature type="topological domain" description="Extracellular" evidence="3">
    <location>
        <begin position="37"/>
        <end position="48"/>
    </location>
</feature>
<feature type="transmembrane region" description="Helical; Name=2" evidence="3">
    <location>
        <begin position="49"/>
        <end position="69"/>
    </location>
</feature>
<feature type="topological domain" description="Cytoplasmic" evidence="3">
    <location>
        <begin position="70"/>
        <end position="82"/>
    </location>
</feature>
<feature type="transmembrane region" description="Helical; Name=3" evidence="3">
    <location>
        <begin position="83"/>
        <end position="103"/>
    </location>
</feature>
<feature type="topological domain" description="Extracellular" evidence="3">
    <location>
        <begin position="104"/>
        <end position="105"/>
    </location>
</feature>
<feature type="transmembrane region" description="Helical; Name=4" evidence="3">
    <location>
        <begin position="106"/>
        <end position="126"/>
    </location>
</feature>
<feature type="topological domain" description="Cytoplasmic" evidence="3">
    <location>
        <begin position="127"/>
        <end position="132"/>
    </location>
</feature>
<feature type="transmembrane region" description="Helical; Name=5" evidence="3">
    <location>
        <begin position="133"/>
        <end position="153"/>
    </location>
</feature>
<feature type="topological domain" description="Extracellular" evidence="3">
    <location>
        <begin position="154"/>
        <end position="165"/>
    </location>
</feature>
<feature type="transmembrane region" description="Helical; Name=6" evidence="3">
    <location>
        <begin position="166"/>
        <end position="186"/>
    </location>
</feature>
<feature type="topological domain" description="Cytoplasmic" evidence="3">
    <location>
        <begin position="187"/>
        <end position="240"/>
    </location>
</feature>
<feature type="transmembrane region" description="Helical; Name=7" evidence="3">
    <location>
        <begin position="241"/>
        <end position="261"/>
    </location>
</feature>
<feature type="topological domain" description="Extracellular" evidence="3">
    <location>
        <begin position="262"/>
        <end position="277"/>
    </location>
</feature>
<feature type="transmembrane region" description="Helical; Name=8" evidence="3">
    <location>
        <begin position="278"/>
        <end position="298"/>
    </location>
</feature>
<feature type="topological domain" description="Cytoplasmic" evidence="3">
    <location>
        <begin position="299"/>
        <end position="305"/>
    </location>
</feature>
<feature type="transmembrane region" description="Helical; Name=9" evidence="3">
    <location>
        <begin position="306"/>
        <end position="326"/>
    </location>
</feature>
<feature type="topological domain" description="Extracellular" evidence="3">
    <location>
        <begin position="327"/>
        <end position="415"/>
    </location>
</feature>
<feature type="transmembrane region" description="Helical; Name=10" evidence="3">
    <location>
        <begin position="416"/>
        <end position="436"/>
    </location>
</feature>
<feature type="topological domain" description="Cytoplasmic" evidence="3">
    <location>
        <begin position="437"/>
        <end position="464"/>
    </location>
</feature>
<feature type="transmembrane region" description="Helical; Name=11" evidence="3">
    <location>
        <begin position="465"/>
        <end position="483"/>
    </location>
</feature>
<feature type="topological domain" description="Extracellular" evidence="3">
    <location>
        <begin position="484"/>
        <end position="485"/>
    </location>
</feature>
<feature type="transmembrane region" description="Helical; Name=12" evidence="3">
    <location>
        <begin position="486"/>
        <end position="506"/>
    </location>
</feature>
<feature type="topological domain" description="Cytoplasmic" evidence="3">
    <location>
        <begin position="507"/>
        <end position="555"/>
    </location>
</feature>
<feature type="region of interest" description="Disordered" evidence="4">
    <location>
        <begin position="528"/>
        <end position="555"/>
    </location>
</feature>
<feature type="binding site" evidence="2">
    <location>
        <begin position="250"/>
        <end position="251"/>
    </location>
    <ligand>
        <name>D-glucose</name>
        <dbReference type="ChEBI" id="CHEBI:4167"/>
    </ligand>
</feature>
<feature type="binding site" evidence="2">
    <location>
        <position position="441"/>
    </location>
    <ligand>
        <name>D-glucose</name>
        <dbReference type="ChEBI" id="CHEBI:4167"/>
    </ligand>
</feature>
<feature type="glycosylation site" description="N-linked (GlcNAc...) asparagine" evidence="3">
    <location>
        <position position="161"/>
    </location>
</feature>
<feature type="glycosylation site" description="N-linked (GlcNAc...) asparagine" evidence="3">
    <location>
        <position position="274"/>
    </location>
</feature>
<feature type="glycosylation site" description="N-linked (GlcNAc...) asparagine" evidence="3">
    <location>
        <position position="344"/>
    </location>
</feature>
<feature type="glycosylation site" description="N-linked (GlcNAc...) asparagine" evidence="3">
    <location>
        <position position="351"/>
    </location>
</feature>
<feature type="glycosylation site" description="N-linked (GlcNAc...) asparagine" evidence="3">
    <location>
        <position position="400"/>
    </location>
</feature>
<feature type="glycosylation site" description="N-linked (GlcNAc...) asparagine" evidence="3">
    <location>
        <position position="413"/>
    </location>
</feature>